<evidence type="ECO:0000250" key="1"/>
<evidence type="ECO:0000305" key="2"/>
<proteinExistence type="inferred from homology"/>
<feature type="chain" id="PRO_0000205741" description="Pre-mRNA-splicing factor CLF1">
    <location>
        <begin position="1"/>
        <end position="695"/>
    </location>
</feature>
<feature type="repeat" description="HAT 1">
    <location>
        <begin position="41"/>
        <end position="73"/>
    </location>
</feature>
<feature type="repeat" description="HAT 2">
    <location>
        <begin position="75"/>
        <end position="107"/>
    </location>
</feature>
<feature type="repeat" description="HAT 3">
    <location>
        <begin position="109"/>
        <end position="141"/>
    </location>
</feature>
<feature type="repeat" description="HAT 4">
    <location>
        <begin position="143"/>
        <end position="174"/>
    </location>
</feature>
<feature type="repeat" description="HAT 5">
    <location>
        <begin position="176"/>
        <end position="207"/>
    </location>
</feature>
<feature type="repeat" description="HAT 6">
    <location>
        <begin position="296"/>
        <end position="328"/>
    </location>
</feature>
<feature type="repeat" description="HAT 7">
    <location>
        <begin position="333"/>
        <end position="365"/>
    </location>
</feature>
<feature type="repeat" description="HAT 8">
    <location>
        <begin position="375"/>
        <end position="412"/>
    </location>
</feature>
<feature type="repeat" description="HAT 9">
    <location>
        <begin position="414"/>
        <end position="445"/>
    </location>
</feature>
<feature type="repeat" description="HAT 10">
    <location>
        <begin position="447"/>
        <end position="479"/>
    </location>
</feature>
<feature type="repeat" description="HAT 11">
    <location>
        <begin position="521"/>
        <end position="553"/>
    </location>
</feature>
<feature type="repeat" description="HAT 12">
    <location>
        <begin position="591"/>
        <end position="629"/>
    </location>
</feature>
<sequence length="695" mass="83375">MTEIPAKQITDNDILKDVYKSQNKQFSIDAIDILDLEELKDVQRRKRTEFEGYLKRNRLDVKQWMRYAVFEIEQHDMRRARSIFERALRVHISYVPLWIRYIESELKLGYINHARNILERAITKLPRVDKLWYKYLIVEESLAHFDIVRNLFQKWCSLEPAAHVWDSFTDFEVRQERYEDVRNIYSKYVLIHPQFSTWRKWINFEVRYGSTKTVRSVYSLALDALIAYSESRNELVDDCINLIVEFSKWEALQKEYIRSKSLLEIAIQKWPKSNTLNNALLQFEREHGTAETLENTIILNRKKHYEDILNEKVYDYDTWLLYLQLLENNYPKLVMEAFSNVLNAAIPTSRTKDKYWKQYILIWIKYLTFLELTINDIPLCGQKFEELIHNIIPNDDFTFSKIWILYAEFEIRQDNLEKARSILGRSLGLCPKRKTFKYYIDLETKLREFDRVRILYENFLKFDPLNLDTWRAYVEFEDSLGDEVRVRSVCMIPIQNNIGLFSKSFQLHLLEILIDYEMEYQNFDNIEPLLKKQVELSNFTVEAWTDYAMKKLTVPTEEQVQNFQIMKEERLKDSSALDEQEIEFEFEITDNNKDNARDVFERALNYFKEIKRDEDRARILQSYVDFEGQYGDISSRQRIEKRLPSIVNGIKDIDGLKTQNITYTFPDDENKSNIDTSNILALAHKWKESQEAKSR</sequence>
<reference key="1">
    <citation type="journal article" date="2004" name="Nature">
        <title>Genome evolution in yeasts.</title>
        <authorList>
            <person name="Dujon B."/>
            <person name="Sherman D."/>
            <person name="Fischer G."/>
            <person name="Durrens P."/>
            <person name="Casaregola S."/>
            <person name="Lafontaine I."/>
            <person name="de Montigny J."/>
            <person name="Marck C."/>
            <person name="Neuveglise C."/>
            <person name="Talla E."/>
            <person name="Goffard N."/>
            <person name="Frangeul L."/>
            <person name="Aigle M."/>
            <person name="Anthouard V."/>
            <person name="Babour A."/>
            <person name="Barbe V."/>
            <person name="Barnay S."/>
            <person name="Blanchin S."/>
            <person name="Beckerich J.-M."/>
            <person name="Beyne E."/>
            <person name="Bleykasten C."/>
            <person name="Boisrame A."/>
            <person name="Boyer J."/>
            <person name="Cattolico L."/>
            <person name="Confanioleri F."/>
            <person name="de Daruvar A."/>
            <person name="Despons L."/>
            <person name="Fabre E."/>
            <person name="Fairhead C."/>
            <person name="Ferry-Dumazet H."/>
            <person name="Groppi A."/>
            <person name="Hantraye F."/>
            <person name="Hennequin C."/>
            <person name="Jauniaux N."/>
            <person name="Joyet P."/>
            <person name="Kachouri R."/>
            <person name="Kerrest A."/>
            <person name="Koszul R."/>
            <person name="Lemaire M."/>
            <person name="Lesur I."/>
            <person name="Ma L."/>
            <person name="Muller H."/>
            <person name="Nicaud J.-M."/>
            <person name="Nikolski M."/>
            <person name="Oztas S."/>
            <person name="Ozier-Kalogeropoulos O."/>
            <person name="Pellenz S."/>
            <person name="Potier S."/>
            <person name="Richard G.-F."/>
            <person name="Straub M.-L."/>
            <person name="Suleau A."/>
            <person name="Swennen D."/>
            <person name="Tekaia F."/>
            <person name="Wesolowski-Louvel M."/>
            <person name="Westhof E."/>
            <person name="Wirth B."/>
            <person name="Zeniou-Meyer M."/>
            <person name="Zivanovic Y."/>
            <person name="Bolotin-Fukuhara M."/>
            <person name="Thierry A."/>
            <person name="Bouchier C."/>
            <person name="Caudron B."/>
            <person name="Scarpelli C."/>
            <person name="Gaillardin C."/>
            <person name="Weissenbach J."/>
            <person name="Wincker P."/>
            <person name="Souciet J.-L."/>
        </authorList>
    </citation>
    <scope>NUCLEOTIDE SEQUENCE [LARGE SCALE GENOMIC DNA]</scope>
    <source>
        <strain>ATCC 2001 / BCRC 20586 / JCM 3761 / NBRC 0622 / NRRL Y-65 / CBS 138</strain>
    </source>
</reference>
<dbReference type="EMBL" id="CR380950">
    <property type="protein sequence ID" value="CAG58429.1"/>
    <property type="molecule type" value="Genomic_DNA"/>
</dbReference>
<dbReference type="RefSeq" id="XP_445518.1">
    <property type="nucleotide sequence ID" value="XM_445518.1"/>
</dbReference>
<dbReference type="SMR" id="Q6FW76"/>
<dbReference type="FunCoup" id="Q6FW76">
    <property type="interactions" value="1176"/>
</dbReference>
<dbReference type="STRING" id="284593.Q6FW76"/>
<dbReference type="EnsemblFungi" id="CAGL0D02376g-T">
    <property type="protein sequence ID" value="CAGL0D02376g-T-p1"/>
    <property type="gene ID" value="CAGL0D02376g"/>
</dbReference>
<dbReference type="KEGG" id="cgr:2887048"/>
<dbReference type="CGD" id="CAL0128287">
    <property type="gene designation" value="CAGL0D02376g"/>
</dbReference>
<dbReference type="VEuPathDB" id="FungiDB:CAGL0D02376g"/>
<dbReference type="eggNOG" id="KOG1915">
    <property type="taxonomic scope" value="Eukaryota"/>
</dbReference>
<dbReference type="HOGENOM" id="CLU_011554_1_0_1"/>
<dbReference type="InParanoid" id="Q6FW76"/>
<dbReference type="OMA" id="HIKVWIS"/>
<dbReference type="Proteomes" id="UP000002428">
    <property type="component" value="Chromosome D"/>
</dbReference>
<dbReference type="GO" id="GO:0000785">
    <property type="term" value="C:chromatin"/>
    <property type="evidence" value="ECO:0007669"/>
    <property type="project" value="EnsemblFungi"/>
</dbReference>
<dbReference type="GO" id="GO:0071011">
    <property type="term" value="C:precatalytic spliceosome"/>
    <property type="evidence" value="ECO:0007669"/>
    <property type="project" value="TreeGrafter"/>
</dbReference>
<dbReference type="GO" id="GO:0000974">
    <property type="term" value="C:Prp19 complex"/>
    <property type="evidence" value="ECO:0007669"/>
    <property type="project" value="EnsemblFungi"/>
</dbReference>
<dbReference type="GO" id="GO:0071006">
    <property type="term" value="C:U2-type catalytic step 1 spliceosome"/>
    <property type="evidence" value="ECO:0007669"/>
    <property type="project" value="EnsemblFungi"/>
</dbReference>
<dbReference type="GO" id="GO:0071007">
    <property type="term" value="C:U2-type catalytic step 2 spliceosome"/>
    <property type="evidence" value="ECO:0007669"/>
    <property type="project" value="EnsemblFungi"/>
</dbReference>
<dbReference type="GO" id="GO:0071008">
    <property type="term" value="C:U2-type post-mRNA release spliceosomal complex"/>
    <property type="evidence" value="ECO:0007669"/>
    <property type="project" value="EnsemblFungi"/>
</dbReference>
<dbReference type="GO" id="GO:0071004">
    <property type="term" value="C:U2-type prespliceosome"/>
    <property type="evidence" value="ECO:0007669"/>
    <property type="project" value="EnsemblFungi"/>
</dbReference>
<dbReference type="GO" id="GO:0003682">
    <property type="term" value="F:chromatin binding"/>
    <property type="evidence" value="ECO:0007669"/>
    <property type="project" value="EnsemblFungi"/>
</dbReference>
<dbReference type="GO" id="GO:0003688">
    <property type="term" value="F:DNA replication origin binding"/>
    <property type="evidence" value="ECO:0007669"/>
    <property type="project" value="EnsemblFungi"/>
</dbReference>
<dbReference type="GO" id="GO:0000354">
    <property type="term" value="P:cis assembly of pre-catalytic spliceosome"/>
    <property type="evidence" value="ECO:0007669"/>
    <property type="project" value="EnsemblFungi"/>
</dbReference>
<dbReference type="GO" id="GO:0006270">
    <property type="term" value="P:DNA replication initiation"/>
    <property type="evidence" value="ECO:0007669"/>
    <property type="project" value="EnsemblFungi"/>
</dbReference>
<dbReference type="Gene3D" id="1.25.40.10">
    <property type="entry name" value="Tetratricopeptide repeat domain"/>
    <property type="match status" value="3"/>
</dbReference>
<dbReference type="InterPro" id="IPR003107">
    <property type="entry name" value="HAT"/>
</dbReference>
<dbReference type="InterPro" id="IPR055433">
    <property type="entry name" value="HAT_Syf1-like_N"/>
</dbReference>
<dbReference type="InterPro" id="IPR045075">
    <property type="entry name" value="Syf1-like"/>
</dbReference>
<dbReference type="InterPro" id="IPR011990">
    <property type="entry name" value="TPR-like_helical_dom_sf"/>
</dbReference>
<dbReference type="PANTHER" id="PTHR11246:SF3">
    <property type="entry name" value="CROOKED NECK-LIKE PROTEIN 1"/>
    <property type="match status" value="1"/>
</dbReference>
<dbReference type="PANTHER" id="PTHR11246">
    <property type="entry name" value="PRE-MRNA SPLICING FACTOR"/>
    <property type="match status" value="1"/>
</dbReference>
<dbReference type="Pfam" id="PF23233">
    <property type="entry name" value="HAT_Syf1_CNRKL1_N"/>
    <property type="match status" value="1"/>
</dbReference>
<dbReference type="SMART" id="SM00386">
    <property type="entry name" value="HAT"/>
    <property type="match status" value="11"/>
</dbReference>
<dbReference type="SUPFAM" id="SSF48452">
    <property type="entry name" value="TPR-like"/>
    <property type="match status" value="2"/>
</dbReference>
<organism>
    <name type="scientific">Candida glabrata (strain ATCC 2001 / BCRC 20586 / JCM 3761 / NBRC 0622 / NRRL Y-65 / CBS 138)</name>
    <name type="common">Yeast</name>
    <name type="synonym">Nakaseomyces glabratus</name>
    <dbReference type="NCBI Taxonomy" id="284593"/>
    <lineage>
        <taxon>Eukaryota</taxon>
        <taxon>Fungi</taxon>
        <taxon>Dikarya</taxon>
        <taxon>Ascomycota</taxon>
        <taxon>Saccharomycotina</taxon>
        <taxon>Saccharomycetes</taxon>
        <taxon>Saccharomycetales</taxon>
        <taxon>Saccharomycetaceae</taxon>
        <taxon>Nakaseomyces</taxon>
    </lineage>
</organism>
<keyword id="KW-0507">mRNA processing</keyword>
<keyword id="KW-0508">mRNA splicing</keyword>
<keyword id="KW-0539">Nucleus</keyword>
<keyword id="KW-1185">Reference proteome</keyword>
<keyword id="KW-0677">Repeat</keyword>
<keyword id="KW-0747">Spliceosome</keyword>
<comment type="function">
    <text evidence="1">Involved in pre-mRNA splicing and cell cycle progression. Required for the spliceosome assembly and initiation of the DNA replication (By similarity).</text>
</comment>
<comment type="subunit">
    <text evidence="1">Associated with the spliceosome.</text>
</comment>
<comment type="subcellular location">
    <subcellularLocation>
        <location evidence="1">Nucleus</location>
    </subcellularLocation>
</comment>
<comment type="similarity">
    <text evidence="2">Belongs to the crooked-neck family.</text>
</comment>
<gene>
    <name type="primary">CLF1</name>
    <name type="ordered locus">CAGL0D02376g</name>
</gene>
<protein>
    <recommendedName>
        <fullName>Pre-mRNA-splicing factor CLF1</fullName>
    </recommendedName>
</protein>
<name>CLF1_CANGA</name>
<accession>Q6FW76</accession>